<feature type="initiator methionine" description="Removed" evidence="12">
    <location>
        <position position="1"/>
    </location>
</feature>
<feature type="chain" id="PRO_0000075113" description="Alanine--tRNA ligase">
    <location>
        <begin position="2"/>
        <end position="876"/>
    </location>
</feature>
<feature type="region of interest" description="Catalytic">
    <location>
        <begin position="2"/>
        <end position="461"/>
    </location>
</feature>
<feature type="region of interest" description="Editing">
    <location>
        <begin position="553"/>
        <end position="705"/>
    </location>
</feature>
<feature type="region of interest" description="Important for oligomerization">
    <location>
        <begin position="699"/>
        <end position="808"/>
    </location>
</feature>
<feature type="region of interest" description="C-Ala domain">
    <location>
        <begin position="766"/>
        <end position="875"/>
    </location>
</feature>
<feature type="binding site" evidence="1">
    <location>
        <position position="564"/>
    </location>
    <ligand>
        <name>Zn(2+)</name>
        <dbReference type="ChEBI" id="CHEBI:29105"/>
    </ligand>
</feature>
<feature type="binding site" evidence="1">
    <location>
        <position position="568"/>
    </location>
    <ligand>
        <name>Zn(2+)</name>
        <dbReference type="ChEBI" id="CHEBI:29105"/>
    </ligand>
</feature>
<feature type="binding site" evidence="1">
    <location>
        <position position="666"/>
    </location>
    <ligand>
        <name>Zn(2+)</name>
        <dbReference type="ChEBI" id="CHEBI:29105"/>
    </ligand>
</feature>
<feature type="binding site" evidence="1">
    <location>
        <position position="670"/>
    </location>
    <ligand>
        <name>Zn(2+)</name>
        <dbReference type="ChEBI" id="CHEBI:29105"/>
    </ligand>
</feature>
<feature type="modified residue" description="N6-acetyllysine" evidence="6 9">
    <location>
        <position position="74"/>
    </location>
</feature>
<feature type="mutagenesis site" description="In mutant 6A; abolished binding to lactate and protein lactylation; when associated with A-70, A-171, A-213 and 236-A--A-238." evidence="10 11">
    <original>M</original>
    <variation>A</variation>
    <location>
        <position position="44"/>
    </location>
</feature>
<feature type="mutagenesis site" description="In mutant 6A; abolished binding to lactate and protein lactylation; when associated with A-44, A-171, A-213 and 236-A--A-238. In ATP-binding mutant; abolished ability to mediate protein lactylation; when associated with A-171 and A-240." evidence="10 11">
    <original>R</original>
    <variation>A</variation>
    <location>
        <position position="70"/>
    </location>
</feature>
<feature type="mutagenesis site" description="Loss of alanylation activity on tRNA(Ala), protein is not acetylated." evidence="9">
    <original>K</original>
    <variation>A</variation>
    <location>
        <position position="74"/>
    </location>
</feature>
<feature type="mutagenesis site" description="In mutant 6A; abolished binding to lactate and protein lactylation; when associated with A-44, A-70, A-213 and 236-A--A-238. In ATP-binding mutant; abolished ability to mediate protein lactylation; when associated with A-70 and A-240." evidence="10 11">
    <original>W</original>
    <variation>A</variation>
    <location>
        <position position="171"/>
    </location>
</feature>
<feature type="mutagenesis site" description="Inactivates the enzyme." evidence="3">
    <original>C</original>
    <variation>S</variation>
    <location>
        <position position="179"/>
    </location>
</feature>
<feature type="mutagenesis site" description="No inactivation." evidence="3">
    <original>C</original>
    <variation>S</variation>
    <location>
        <position position="182"/>
    </location>
</feature>
<feature type="mutagenesis site" description="No inactivation." evidence="3">
    <original>E</original>
    <variation>Q</variation>
    <location>
        <position position="184"/>
    </location>
</feature>
<feature type="mutagenesis site" description="No inactivation." evidence="3">
    <original>D</original>
    <variation>N</variation>
    <location>
        <position position="188"/>
    </location>
</feature>
<feature type="mutagenesis site" description="Inactivates the enzyme." evidence="3">
    <original>H</original>
    <variation>Q</variation>
    <location>
        <position position="189"/>
    </location>
</feature>
<feature type="mutagenesis site" description="No inactivation." evidence="3">
    <original>D</original>
    <variation>N</variation>
    <location>
        <position position="191"/>
    </location>
</feature>
<feature type="mutagenesis site" description="Inactivates the enzyme." evidence="3">
    <original>H</original>
    <variation>Q</variation>
    <location>
        <position position="192"/>
    </location>
</feature>
<feature type="mutagenesis site" description="In mutant 6A; abolished binding to lactate and protein lactylation; when associated with A-44, A-70, A-171 and 236-A--A-238." evidence="10 11">
    <original>N</original>
    <variation>A</variation>
    <location>
        <position position="213"/>
    </location>
</feature>
<feature type="mutagenesis site" description="In mutant 6A; abolished binding to lactate and protein lactylation; when associated with A-44, A-70, A-171 and A-213." evidence="10 11">
    <original>DTG</original>
    <variation>ATA</variation>
    <location>
        <begin position="236"/>
        <end position="238"/>
    </location>
</feature>
<feature type="mutagenesis site" description="Decreases affinity for alanine without improving discrimination against serine." evidence="7">
    <original>D</original>
    <variation>A</variation>
    <variation>N</variation>
    <location>
        <position position="236"/>
    </location>
</feature>
<feature type="mutagenesis site" description="Greatly decreases affinity for alanine with only small changes in affinity for serine and glycine, in a 2-442 residue construct." evidence="7">
    <original>G</original>
    <variation>A</variation>
    <location>
        <position position="238"/>
    </location>
</feature>
<feature type="mutagenesis site" description="In ATP-binding mutant; abolished ability to mediate protein lactylation." evidence="11">
    <original>G</original>
    <variation>A</variation>
    <location>
        <position position="240"/>
    </location>
</feature>
<feature type="mutagenesis site" description="No effect on tRNA editing." evidence="2">
    <original>H</original>
    <variation>A</variation>
    <location>
        <position position="564"/>
    </location>
</feature>
<feature type="mutagenesis site" description="Complete loss of tRNA editing; when associated with W-587 and F-666." evidence="8">
    <original>T</original>
    <variation>F</variation>
    <location>
        <position position="567"/>
    </location>
</feature>
<feature type="mutagenesis site" description="No effect on tRNA editing." evidence="2">
    <original>H</original>
    <variation>A</variation>
    <location>
        <position position="568"/>
    </location>
</feature>
<feature type="mutagenesis site" description="Loss of mischarged tRNA editing activity; when associated with A-666." evidence="2 5">
    <original>Q</original>
    <variation>H</variation>
    <location>
        <position position="584"/>
    </location>
</feature>
<feature type="mutagenesis site" description="Complete loss of tRNA editing; when associated with F-567 and F-666." evidence="8">
    <original>S</original>
    <variation>W</variation>
    <location>
        <position position="587"/>
    </location>
</feature>
<feature type="mutagenesis site" description="Loss of mischarged tRNA editing activity; when associated with H-584 the effect is more pronounced." evidence="2 5 8">
    <original>C</original>
    <variation>A</variation>
    <location>
        <position position="666"/>
    </location>
</feature>
<feature type="mutagenesis site" description="Complete loss of tRNA editing; when associated with F-567 and W-587." evidence="8">
    <original>C</original>
    <variation>F</variation>
    <location>
        <position position="666"/>
    </location>
</feature>
<feature type="mutagenesis site" description="No effect on tRNA editing." evidence="2">
    <original>H</original>
    <variation>A</variation>
    <location>
        <position position="670"/>
    </location>
</feature>
<feature type="mutagenesis site" description="Reduces specificity of editing activity for tRNA(Ala), allows editing of tRNA(Thr)." evidence="4">
    <original>R</original>
    <variation>K</variation>
    <location>
        <position position="693"/>
    </location>
</feature>
<feature type="sequence conflict" description="In Ref. 4; no nucleotide entry and 5; AAA03208." evidence="14" ref="4 5">
    <original>LVPHN</original>
    <variation>RYPIT</variation>
    <location>
        <begin position="29"/>
        <end position="33"/>
    </location>
</feature>
<feature type="sequence conflict" description="In Ref. 4; no nucleotide entry and 5; AAA03208." evidence="14" ref="4 5">
    <original>G</original>
    <variation>N</variation>
    <location>
        <position position="158"/>
    </location>
</feature>
<feature type="sequence conflict" description="In Ref. 5; AAA03208." evidence="14" ref="5">
    <original>D</original>
    <variation>G</variation>
    <location>
        <position position="168"/>
    </location>
</feature>
<feature type="sequence conflict" description="In Ref. 5; AAA03208." evidence="14" ref="5">
    <original>Q</original>
    <variation>R</variation>
    <location>
        <position position="172"/>
    </location>
</feature>
<feature type="sequence conflict" description="In Ref. 5; AAA03208." evidence="14" ref="5">
    <original>D</original>
    <variation>G</variation>
    <location>
        <position position="175"/>
    </location>
</feature>
<feature type="sequence conflict" description="In Ref. 5; AAA03208." evidence="14" ref="5">
    <original>G</original>
    <variation>D</variation>
    <location>
        <position position="180"/>
    </location>
</feature>
<feature type="sequence conflict" description="In Ref. 5; AAA03208." evidence="14" ref="5">
    <original>Q</original>
    <variation>H</variation>
    <location>
        <position position="584"/>
    </location>
</feature>
<feature type="sequence conflict" description="In Ref. 5; AAA03208." evidence="14" ref="5">
    <original>Q</original>
    <variation>L</variation>
    <location>
        <position position="619"/>
    </location>
</feature>
<feature type="helix" evidence="25">
    <location>
        <begin position="5"/>
        <end position="18"/>
    </location>
</feature>
<feature type="helix" evidence="25">
    <location>
        <begin position="43"/>
        <end position="47"/>
    </location>
</feature>
<feature type="helix" evidence="25">
    <location>
        <begin position="48"/>
        <end position="51"/>
    </location>
</feature>
<feature type="strand" evidence="25">
    <location>
        <begin position="60"/>
        <end position="69"/>
    </location>
</feature>
<feature type="helix" evidence="25">
    <location>
        <begin position="78"/>
        <end position="80"/>
    </location>
</feature>
<feature type="turn" evidence="24">
    <location>
        <begin position="81"/>
        <end position="83"/>
    </location>
</feature>
<feature type="strand" evidence="25">
    <location>
        <begin position="84"/>
        <end position="86"/>
    </location>
</feature>
<feature type="strand" evidence="25">
    <location>
        <begin position="89"/>
        <end position="101"/>
    </location>
</feature>
<feature type="helix" evidence="25">
    <location>
        <begin position="104"/>
        <end position="116"/>
    </location>
</feature>
<feature type="turn" evidence="25">
    <location>
        <begin position="118"/>
        <end position="121"/>
    </location>
</feature>
<feature type="helix" evidence="25">
    <location>
        <begin position="125"/>
        <end position="127"/>
    </location>
</feature>
<feature type="strand" evidence="25">
    <location>
        <begin position="128"/>
        <end position="133"/>
    </location>
</feature>
<feature type="helix" evidence="25">
    <location>
        <begin position="137"/>
        <end position="145"/>
    </location>
</feature>
<feature type="helix" evidence="25">
    <location>
        <begin position="151"/>
        <end position="153"/>
    </location>
</feature>
<feature type="strand" evidence="25">
    <location>
        <begin position="154"/>
        <end position="157"/>
    </location>
</feature>
<feature type="strand" evidence="25">
    <location>
        <begin position="170"/>
        <end position="188"/>
    </location>
</feature>
<feature type="turn" evidence="25">
    <location>
        <begin position="201"/>
        <end position="204"/>
    </location>
</feature>
<feature type="strand" evidence="25">
    <location>
        <begin position="205"/>
        <end position="221"/>
    </location>
</feature>
<feature type="strand" evidence="26">
    <location>
        <begin position="223"/>
        <end position="225"/>
    </location>
</feature>
<feature type="strand" evidence="25">
    <location>
        <begin position="227"/>
        <end position="240"/>
    </location>
</feature>
<feature type="helix" evidence="25">
    <location>
        <begin position="241"/>
        <end position="248"/>
    </location>
</feature>
<feature type="helix" evidence="25">
    <location>
        <begin position="254"/>
        <end position="256"/>
    </location>
</feature>
<feature type="helix" evidence="25">
    <location>
        <begin position="258"/>
        <end position="271"/>
    </location>
</feature>
<feature type="helix" evidence="25">
    <location>
        <begin position="279"/>
        <end position="296"/>
    </location>
</feature>
<feature type="helix" evidence="25">
    <location>
        <begin position="305"/>
        <end position="324"/>
    </location>
</feature>
<feature type="helix" evidence="25">
    <location>
        <begin position="331"/>
        <end position="334"/>
    </location>
</feature>
<feature type="helix" evidence="25">
    <location>
        <begin position="335"/>
        <end position="342"/>
    </location>
</feature>
<feature type="helix" evidence="25">
    <location>
        <begin position="343"/>
        <end position="346"/>
    </location>
</feature>
<feature type="helix" evidence="25">
    <location>
        <begin position="347"/>
        <end position="351"/>
    </location>
</feature>
<feature type="helix" evidence="25">
    <location>
        <begin position="353"/>
        <end position="368"/>
    </location>
</feature>
<feature type="helix" evidence="25">
    <location>
        <begin position="371"/>
        <end position="383"/>
    </location>
</feature>
<feature type="strand" evidence="25">
    <location>
        <begin position="387"/>
        <end position="390"/>
    </location>
</feature>
<feature type="helix" evidence="25">
    <location>
        <begin position="392"/>
        <end position="402"/>
    </location>
</feature>
<feature type="helix" evidence="25">
    <location>
        <begin position="406"/>
        <end position="414"/>
    </location>
</feature>
<feature type="turn" evidence="25">
    <location>
        <begin position="415"/>
        <end position="417"/>
    </location>
</feature>
<feature type="helix" evidence="25">
    <location>
        <begin position="422"/>
        <end position="440"/>
    </location>
</feature>
<dbReference type="EC" id="6.1.1.7" evidence="9 12"/>
<dbReference type="EC" id="6.-.-.-" evidence="10 11"/>
<dbReference type="EMBL" id="U00096">
    <property type="protein sequence ID" value="AAC75739.1"/>
    <property type="molecule type" value="Genomic_DNA"/>
</dbReference>
<dbReference type="EMBL" id="AP009048">
    <property type="protein sequence ID" value="BAA16559.1"/>
    <property type="molecule type" value="Genomic_DNA"/>
</dbReference>
<dbReference type="EMBL" id="J01581">
    <property type="protein sequence ID" value="AAA03208.1"/>
    <property type="molecule type" value="Unassigned_DNA"/>
</dbReference>
<dbReference type="EMBL" id="L07596">
    <property type="protein sequence ID" value="AAA71918.1"/>
    <property type="status" value="ALT_SEQ"/>
    <property type="molecule type" value="Unassigned_DNA"/>
</dbReference>
<dbReference type="EMBL" id="D44453">
    <property type="protein sequence ID" value="BAA21554.1"/>
    <property type="molecule type" value="Genomic_DNA"/>
</dbReference>
<dbReference type="EMBL" id="Z28405">
    <property type="protein sequence ID" value="CAA82247.1"/>
    <property type="molecule type" value="Genomic_DNA"/>
</dbReference>
<dbReference type="PIR" id="E65049">
    <property type="entry name" value="SYECAT"/>
</dbReference>
<dbReference type="RefSeq" id="NP_417177.1">
    <property type="nucleotide sequence ID" value="NC_000913.3"/>
</dbReference>
<dbReference type="RefSeq" id="WP_000047184.1">
    <property type="nucleotide sequence ID" value="NZ_LN832404.1"/>
</dbReference>
<dbReference type="PDB" id="3HXU">
    <property type="method" value="X-ray"/>
    <property type="resolution" value="2.10 A"/>
    <property type="chains" value="A=2-442"/>
</dbReference>
<dbReference type="PDB" id="3HXV">
    <property type="method" value="X-ray"/>
    <property type="resolution" value="1.93 A"/>
    <property type="chains" value="A=2-442"/>
</dbReference>
<dbReference type="PDB" id="3HXW">
    <property type="method" value="X-ray"/>
    <property type="resolution" value="1.93 A"/>
    <property type="chains" value="A=2-442"/>
</dbReference>
<dbReference type="PDB" id="3HXX">
    <property type="method" value="X-ray"/>
    <property type="resolution" value="2.11 A"/>
    <property type="chains" value="A=2-442"/>
</dbReference>
<dbReference type="PDB" id="3HXY">
    <property type="method" value="X-ray"/>
    <property type="resolution" value="2.27 A"/>
    <property type="chains" value="A=2-442"/>
</dbReference>
<dbReference type="PDB" id="3HXZ">
    <property type="method" value="X-ray"/>
    <property type="resolution" value="1.99 A"/>
    <property type="chains" value="A/B/C/D=2-442"/>
</dbReference>
<dbReference type="PDB" id="3HY0">
    <property type="method" value="X-ray"/>
    <property type="resolution" value="1.90 A"/>
    <property type="chains" value="A/B=2-442"/>
</dbReference>
<dbReference type="PDB" id="3HY1">
    <property type="method" value="X-ray"/>
    <property type="resolution" value="2.79 A"/>
    <property type="chains" value="A/B=2-442"/>
</dbReference>
<dbReference type="PDBsum" id="3HXU"/>
<dbReference type="PDBsum" id="3HXV"/>
<dbReference type="PDBsum" id="3HXW"/>
<dbReference type="PDBsum" id="3HXX"/>
<dbReference type="PDBsum" id="3HXY"/>
<dbReference type="PDBsum" id="3HXZ"/>
<dbReference type="PDBsum" id="3HY0"/>
<dbReference type="PDBsum" id="3HY1"/>
<dbReference type="SMR" id="P00957"/>
<dbReference type="BioGRID" id="4261283">
    <property type="interactions" value="66"/>
</dbReference>
<dbReference type="BioGRID" id="851507">
    <property type="interactions" value="1"/>
</dbReference>
<dbReference type="DIP" id="DIP-9080N"/>
<dbReference type="FunCoup" id="P00957">
    <property type="interactions" value="916"/>
</dbReference>
<dbReference type="IntAct" id="P00957">
    <property type="interactions" value="22"/>
</dbReference>
<dbReference type="STRING" id="511145.b2697"/>
<dbReference type="MoonProt" id="P00957"/>
<dbReference type="iPTMnet" id="P00957"/>
<dbReference type="jPOST" id="P00957"/>
<dbReference type="PaxDb" id="511145-b2697"/>
<dbReference type="EnsemblBacteria" id="AAC75739">
    <property type="protein sequence ID" value="AAC75739"/>
    <property type="gene ID" value="b2697"/>
</dbReference>
<dbReference type="GeneID" id="947175"/>
<dbReference type="KEGG" id="ecj:JW2667"/>
<dbReference type="KEGG" id="eco:b2697"/>
<dbReference type="KEGG" id="ecoc:C3026_14845"/>
<dbReference type="PATRIC" id="fig|1411691.4.peg.4046"/>
<dbReference type="EchoBASE" id="EB0033"/>
<dbReference type="eggNOG" id="COG0013">
    <property type="taxonomic scope" value="Bacteria"/>
</dbReference>
<dbReference type="HOGENOM" id="CLU_004485_1_1_6"/>
<dbReference type="InParanoid" id="P00957"/>
<dbReference type="OMA" id="NKKDNFW"/>
<dbReference type="OrthoDB" id="9803884at2"/>
<dbReference type="PhylomeDB" id="P00957"/>
<dbReference type="BioCyc" id="EcoCyc:ALAS-MONOMER"/>
<dbReference type="BioCyc" id="MetaCyc:ALAS-MONOMER"/>
<dbReference type="BRENDA" id="6.1.1.7">
    <property type="organism ID" value="2026"/>
</dbReference>
<dbReference type="EvolutionaryTrace" id="P00957"/>
<dbReference type="PRO" id="PR:P00957"/>
<dbReference type="Proteomes" id="UP000000625">
    <property type="component" value="Chromosome"/>
</dbReference>
<dbReference type="GO" id="GO:0005829">
    <property type="term" value="C:cytosol"/>
    <property type="evidence" value="ECO:0000314"/>
    <property type="project" value="EcoCyc"/>
</dbReference>
<dbReference type="GO" id="GO:0016020">
    <property type="term" value="C:membrane"/>
    <property type="evidence" value="ECO:0007005"/>
    <property type="project" value="UniProtKB"/>
</dbReference>
<dbReference type="GO" id="GO:0004813">
    <property type="term" value="F:alanine-tRNA ligase activity"/>
    <property type="evidence" value="ECO:0000314"/>
    <property type="project" value="EcoCyc"/>
</dbReference>
<dbReference type="GO" id="GO:0002161">
    <property type="term" value="F:aminoacyl-tRNA deacylase activity"/>
    <property type="evidence" value="ECO:0000314"/>
    <property type="project" value="UniProtKB"/>
</dbReference>
<dbReference type="GO" id="GO:0005524">
    <property type="term" value="F:ATP binding"/>
    <property type="evidence" value="ECO:0007669"/>
    <property type="project" value="UniProtKB-UniRule"/>
</dbReference>
<dbReference type="GO" id="GO:0001217">
    <property type="term" value="F:DNA-binding transcription repressor activity"/>
    <property type="evidence" value="ECO:0000314"/>
    <property type="project" value="EcoCyc"/>
</dbReference>
<dbReference type="GO" id="GO:0042802">
    <property type="term" value="F:identical protein binding"/>
    <property type="evidence" value="ECO:0000353"/>
    <property type="project" value="IntAct"/>
</dbReference>
<dbReference type="GO" id="GO:0141207">
    <property type="term" value="F:peptide lactyltransferase (ATP-dependent) activity"/>
    <property type="evidence" value="ECO:0000314"/>
    <property type="project" value="UniProtKB"/>
</dbReference>
<dbReference type="GO" id="GO:0042803">
    <property type="term" value="F:protein homodimerization activity"/>
    <property type="evidence" value="ECO:0000314"/>
    <property type="project" value="EcoCyc"/>
</dbReference>
<dbReference type="GO" id="GO:0002196">
    <property type="term" value="F:Ser-tRNA(Ala) deacylase activity"/>
    <property type="evidence" value="ECO:0000314"/>
    <property type="project" value="EcoCyc"/>
</dbReference>
<dbReference type="GO" id="GO:0000049">
    <property type="term" value="F:tRNA binding"/>
    <property type="evidence" value="ECO:0007669"/>
    <property type="project" value="UniProtKB-KW"/>
</dbReference>
<dbReference type="GO" id="GO:0008270">
    <property type="term" value="F:zinc ion binding"/>
    <property type="evidence" value="ECO:0000314"/>
    <property type="project" value="EcoCyc"/>
</dbReference>
<dbReference type="GO" id="GO:0006419">
    <property type="term" value="P:alanyl-tRNA aminoacylation"/>
    <property type="evidence" value="ECO:0000314"/>
    <property type="project" value="EcoCyc"/>
</dbReference>
<dbReference type="GO" id="GO:0045892">
    <property type="term" value="P:negative regulation of DNA-templated transcription"/>
    <property type="evidence" value="ECO:0000314"/>
    <property type="project" value="EcoCyc"/>
</dbReference>
<dbReference type="CDD" id="cd00673">
    <property type="entry name" value="AlaRS_core"/>
    <property type="match status" value="1"/>
</dbReference>
<dbReference type="FunFam" id="2.40.30.130:FF:000001">
    <property type="entry name" value="Alanine--tRNA ligase"/>
    <property type="match status" value="1"/>
</dbReference>
<dbReference type="FunFam" id="3.10.310.40:FF:000001">
    <property type="entry name" value="Alanine--tRNA ligase"/>
    <property type="match status" value="1"/>
</dbReference>
<dbReference type="FunFam" id="3.30.54.20:FF:000001">
    <property type="entry name" value="Alanine--tRNA ligase"/>
    <property type="match status" value="1"/>
</dbReference>
<dbReference type="FunFam" id="3.30.930.10:FF:000004">
    <property type="entry name" value="Alanine--tRNA ligase"/>
    <property type="match status" value="1"/>
</dbReference>
<dbReference type="FunFam" id="3.30.980.10:FF:000004">
    <property type="entry name" value="Alanine--tRNA ligase, cytoplasmic"/>
    <property type="match status" value="1"/>
</dbReference>
<dbReference type="Gene3D" id="2.40.30.130">
    <property type="match status" value="1"/>
</dbReference>
<dbReference type="Gene3D" id="3.10.310.40">
    <property type="match status" value="1"/>
</dbReference>
<dbReference type="Gene3D" id="3.30.54.20">
    <property type="match status" value="1"/>
</dbReference>
<dbReference type="Gene3D" id="6.10.250.550">
    <property type="match status" value="1"/>
</dbReference>
<dbReference type="Gene3D" id="3.30.930.10">
    <property type="entry name" value="Bira Bifunctional Protein, Domain 2"/>
    <property type="match status" value="1"/>
</dbReference>
<dbReference type="Gene3D" id="3.30.980.10">
    <property type="entry name" value="Threonyl-trna Synthetase, Chain A, domain 2"/>
    <property type="match status" value="1"/>
</dbReference>
<dbReference type="HAMAP" id="MF_00036_B">
    <property type="entry name" value="Ala_tRNA_synth_B"/>
    <property type="match status" value="1"/>
</dbReference>
<dbReference type="InterPro" id="IPR045864">
    <property type="entry name" value="aa-tRNA-synth_II/BPL/LPL"/>
</dbReference>
<dbReference type="InterPro" id="IPR002318">
    <property type="entry name" value="Ala-tRNA-lgiase_IIc"/>
</dbReference>
<dbReference type="InterPro" id="IPR018162">
    <property type="entry name" value="Ala-tRNA-ligase_IIc_anticod-bd"/>
</dbReference>
<dbReference type="InterPro" id="IPR018165">
    <property type="entry name" value="Ala-tRNA-synth_IIc_core"/>
</dbReference>
<dbReference type="InterPro" id="IPR018164">
    <property type="entry name" value="Ala-tRNA-synth_IIc_N"/>
</dbReference>
<dbReference type="InterPro" id="IPR050058">
    <property type="entry name" value="Ala-tRNA_ligase"/>
</dbReference>
<dbReference type="InterPro" id="IPR023033">
    <property type="entry name" value="Ala_tRNA_ligase_euk/bac"/>
</dbReference>
<dbReference type="InterPro" id="IPR003156">
    <property type="entry name" value="DHHA1_dom"/>
</dbReference>
<dbReference type="InterPro" id="IPR018163">
    <property type="entry name" value="Thr/Ala-tRNA-synth_IIc_edit"/>
</dbReference>
<dbReference type="InterPro" id="IPR009000">
    <property type="entry name" value="Transl_B-barrel_sf"/>
</dbReference>
<dbReference type="InterPro" id="IPR012947">
    <property type="entry name" value="tRNA_SAD"/>
</dbReference>
<dbReference type="NCBIfam" id="TIGR00344">
    <property type="entry name" value="alaS"/>
    <property type="match status" value="1"/>
</dbReference>
<dbReference type="PANTHER" id="PTHR11777:SF9">
    <property type="entry name" value="ALANINE--TRNA LIGASE, CYTOPLASMIC"/>
    <property type="match status" value="1"/>
</dbReference>
<dbReference type="PANTHER" id="PTHR11777">
    <property type="entry name" value="ALANYL-TRNA SYNTHETASE"/>
    <property type="match status" value="1"/>
</dbReference>
<dbReference type="Pfam" id="PF02272">
    <property type="entry name" value="DHHA1"/>
    <property type="match status" value="1"/>
</dbReference>
<dbReference type="Pfam" id="PF01411">
    <property type="entry name" value="tRNA-synt_2c"/>
    <property type="match status" value="1"/>
</dbReference>
<dbReference type="Pfam" id="PF07973">
    <property type="entry name" value="tRNA_SAD"/>
    <property type="match status" value="1"/>
</dbReference>
<dbReference type="PRINTS" id="PR00980">
    <property type="entry name" value="TRNASYNTHALA"/>
</dbReference>
<dbReference type="SMART" id="SM00863">
    <property type="entry name" value="tRNA_SAD"/>
    <property type="match status" value="1"/>
</dbReference>
<dbReference type="SUPFAM" id="SSF55681">
    <property type="entry name" value="Class II aaRS and biotin synthetases"/>
    <property type="match status" value="1"/>
</dbReference>
<dbReference type="SUPFAM" id="SSF101353">
    <property type="entry name" value="Putative anticodon-binding domain of alanyl-tRNA synthetase (AlaRS)"/>
    <property type="match status" value="1"/>
</dbReference>
<dbReference type="SUPFAM" id="SSF55186">
    <property type="entry name" value="ThrRS/AlaRS common domain"/>
    <property type="match status" value="1"/>
</dbReference>
<dbReference type="SUPFAM" id="SSF50447">
    <property type="entry name" value="Translation proteins"/>
    <property type="match status" value="1"/>
</dbReference>
<dbReference type="PROSITE" id="PS50860">
    <property type="entry name" value="AA_TRNA_LIGASE_II_ALA"/>
    <property type="match status" value="1"/>
</dbReference>
<protein>
    <recommendedName>
        <fullName>Alanine--tRNA ligase</fullName>
        <ecNumber evidence="9 12">6.1.1.7</ecNumber>
    </recommendedName>
    <alternativeName>
        <fullName>Alanyl-tRNA synthetase</fullName>
        <shortName>AlaRS</shortName>
    </alternativeName>
    <alternativeName>
        <fullName evidence="14">Protein lactyltransferase</fullName>
        <ecNumber evidence="10 11">6.-.-.-</ecNumber>
    </alternativeName>
</protein>
<evidence type="ECO:0000250" key="1"/>
<evidence type="ECO:0000269" key="2">
    <source>
    </source>
</evidence>
<evidence type="ECO:0000269" key="3">
    <source>
    </source>
</evidence>
<evidence type="ECO:0000269" key="4">
    <source>
    </source>
</evidence>
<evidence type="ECO:0000269" key="5">
    <source>
    </source>
</evidence>
<evidence type="ECO:0000269" key="6">
    <source>
    </source>
</evidence>
<evidence type="ECO:0000269" key="7">
    <source>
    </source>
</evidence>
<evidence type="ECO:0000269" key="8">
    <source>
    </source>
</evidence>
<evidence type="ECO:0000269" key="9">
    <source>
    </source>
</evidence>
<evidence type="ECO:0000269" key="10">
    <source>
    </source>
</evidence>
<evidence type="ECO:0000269" key="11">
    <source>
    </source>
</evidence>
<evidence type="ECO:0000269" key="12">
    <source>
    </source>
</evidence>
<evidence type="ECO:0000269" key="13">
    <source>
    </source>
</evidence>
<evidence type="ECO:0000305" key="14"/>
<evidence type="ECO:0000305" key="15">
    <source>
    </source>
</evidence>
<evidence type="ECO:0007744" key="16">
    <source>
        <dbReference type="PDB" id="3HXU"/>
    </source>
</evidence>
<evidence type="ECO:0007744" key="17">
    <source>
        <dbReference type="PDB" id="3HXV"/>
    </source>
</evidence>
<evidence type="ECO:0007744" key="18">
    <source>
        <dbReference type="PDB" id="3HXW"/>
    </source>
</evidence>
<evidence type="ECO:0007744" key="19">
    <source>
        <dbReference type="PDB" id="3HXX"/>
    </source>
</evidence>
<evidence type="ECO:0007744" key="20">
    <source>
        <dbReference type="PDB" id="3HXY"/>
    </source>
</evidence>
<evidence type="ECO:0007744" key="21">
    <source>
        <dbReference type="PDB" id="3HXZ"/>
    </source>
</evidence>
<evidence type="ECO:0007744" key="22">
    <source>
        <dbReference type="PDB" id="3HY0"/>
    </source>
</evidence>
<evidence type="ECO:0007744" key="23">
    <source>
        <dbReference type="PDB" id="3HY1"/>
    </source>
</evidence>
<evidence type="ECO:0007829" key="24">
    <source>
        <dbReference type="PDB" id="3HXU"/>
    </source>
</evidence>
<evidence type="ECO:0007829" key="25">
    <source>
        <dbReference type="PDB" id="3HY0"/>
    </source>
</evidence>
<evidence type="ECO:0007829" key="26">
    <source>
        <dbReference type="PDB" id="3HY1"/>
    </source>
</evidence>
<organism>
    <name type="scientific">Escherichia coli (strain K12)</name>
    <dbReference type="NCBI Taxonomy" id="83333"/>
    <lineage>
        <taxon>Bacteria</taxon>
        <taxon>Pseudomonadati</taxon>
        <taxon>Pseudomonadota</taxon>
        <taxon>Gammaproteobacteria</taxon>
        <taxon>Enterobacterales</taxon>
        <taxon>Enterobacteriaceae</taxon>
        <taxon>Escherichia</taxon>
    </lineage>
</organism>
<gene>
    <name type="primary">alaS</name>
    <name type="synonym">lovB</name>
    <name type="ordered locus">b2697</name>
    <name type="ordered locus">JW2667</name>
</gene>
<name>SYA_ECOLI</name>
<reference key="1">
    <citation type="journal article" date="1997" name="DNA Res.">
        <title>Construction of a contiguous 874-kb sequence of the Escherichia coli-K12 genome corresponding to 50.0-68.8 min on the linkage map and analysis of its sequence features.</title>
        <authorList>
            <person name="Yamamoto Y."/>
            <person name="Aiba H."/>
            <person name="Baba T."/>
            <person name="Hayashi K."/>
            <person name="Inada T."/>
            <person name="Isono K."/>
            <person name="Itoh T."/>
            <person name="Kimura S."/>
            <person name="Kitagawa M."/>
            <person name="Makino K."/>
            <person name="Miki T."/>
            <person name="Mitsuhashi N."/>
            <person name="Mizobuchi K."/>
            <person name="Mori H."/>
            <person name="Nakade S."/>
            <person name="Nakamura Y."/>
            <person name="Nashimoto H."/>
            <person name="Oshima T."/>
            <person name="Oyama S."/>
            <person name="Saito N."/>
            <person name="Sampei G."/>
            <person name="Satoh Y."/>
            <person name="Sivasundaram S."/>
            <person name="Tagami H."/>
            <person name="Takahashi H."/>
            <person name="Takeda J."/>
            <person name="Takemoto K."/>
            <person name="Uehara K."/>
            <person name="Wada C."/>
            <person name="Yamagata S."/>
            <person name="Horiuchi T."/>
        </authorList>
    </citation>
    <scope>NUCLEOTIDE SEQUENCE [LARGE SCALE GENOMIC DNA]</scope>
    <source>
        <strain>K12 / W3110 / ATCC 27325 / DSM 5911</strain>
    </source>
</reference>
<reference key="2">
    <citation type="journal article" date="1997" name="Science">
        <title>The complete genome sequence of Escherichia coli K-12.</title>
        <authorList>
            <person name="Blattner F.R."/>
            <person name="Plunkett G. III"/>
            <person name="Bloch C.A."/>
            <person name="Perna N.T."/>
            <person name="Burland V."/>
            <person name="Riley M."/>
            <person name="Collado-Vides J."/>
            <person name="Glasner J.D."/>
            <person name="Rode C.K."/>
            <person name="Mayhew G.F."/>
            <person name="Gregor J."/>
            <person name="Davis N.W."/>
            <person name="Kirkpatrick H.A."/>
            <person name="Goeden M.A."/>
            <person name="Rose D.J."/>
            <person name="Mau B."/>
            <person name="Shao Y."/>
        </authorList>
    </citation>
    <scope>NUCLEOTIDE SEQUENCE [LARGE SCALE GENOMIC DNA]</scope>
    <source>
        <strain>K12 / MG1655 / ATCC 47076</strain>
    </source>
</reference>
<reference key="3">
    <citation type="journal article" date="2006" name="Mol. Syst. Biol.">
        <title>Highly accurate genome sequences of Escherichia coli K-12 strains MG1655 and W3110.</title>
        <authorList>
            <person name="Hayashi K."/>
            <person name="Morooka N."/>
            <person name="Yamamoto Y."/>
            <person name="Fujita K."/>
            <person name="Isono K."/>
            <person name="Choi S."/>
            <person name="Ohtsubo E."/>
            <person name="Baba T."/>
            <person name="Wanner B.L."/>
            <person name="Mori H."/>
            <person name="Horiuchi T."/>
        </authorList>
    </citation>
    <scope>NUCLEOTIDE SEQUENCE [LARGE SCALE GENOMIC DNA]</scope>
    <source>
        <strain>K12 / W3110 / ATCC 27325 / DSM 5911</strain>
    </source>
</reference>
<reference key="4">
    <citation type="journal article" date="1980" name="Proc. Natl. Acad. Sci. U.S.A.">
        <title>Mass spectra of partial protein hydrolysates as a multiple phase check for long polypeptides deduced from DNA sequences: NH2-terminal segment of alanine tRNA synthetase.</title>
        <authorList>
            <person name="Herlihy W.C."/>
            <person name="Royal N.J."/>
            <person name="Biemann K."/>
            <person name="Putney S.D."/>
            <person name="Schimmel P.R."/>
        </authorList>
    </citation>
    <scope>NUCLEOTIDE SEQUENCE [GENOMIC DNA] OF 1-166</scope>
    <scope>PARTIAL PROTEIN SEQUENCE</scope>
</reference>
<reference key="5">
    <citation type="journal article" date="1981" name="Science">
        <title>Primary structure of a large aminoacyl-tRNA synthetase.</title>
        <authorList>
            <person name="Putney S.D."/>
            <person name="Royal N.J."/>
            <person name="de Vegvar H.N."/>
            <person name="Herlihy W.C."/>
            <person name="Biemann K."/>
            <person name="Schimmel P."/>
        </authorList>
    </citation>
    <scope>NUCLEOTIDE SEQUENCE [GENOMIC DNA] OF 2-876</scope>
</reference>
<reference key="6">
    <citation type="journal article" date="1981" name="J. Biol. Chem.">
        <title>Purification and properties of alanine tRNA synthetase from Escherichia coli A tetramer of identical subunits.</title>
        <authorList>
            <person name="Putney S.D."/>
            <person name="Sauer R.T."/>
            <person name="Schimmel P.R."/>
        </authorList>
    </citation>
    <scope>PROTEIN SEQUENCE OF 2-12</scope>
    <scope>SUBUNIT</scope>
    <scope>CATALYTIC ACTIVITY</scope>
</reference>
<reference key="7">
    <citation type="journal article" date="1994" name="Biochemistry">
        <title>Acceptor helix interactions in a class II tRNA synthetase: photoaffinity cross-linking of an RNA miniduplex substrate.</title>
        <authorList>
            <person name="Musier-Forsyth K."/>
            <person name="Schimmel P."/>
        </authorList>
    </citation>
    <scope>PROTEIN SEQUENCE OF 163-173</scope>
</reference>
<reference key="8">
    <citation type="journal article" date="1996" name="J. Mol. Biol.">
        <title>Evidence for involvement of Escherichia coli genes pmbA, csrA and a previously unrecognized gene tldD, in the control of DNA gyrase by letD (ccdB) of sex factor F.</title>
        <authorList>
            <person name="Murayama N."/>
            <person name="Shimizu H."/>
            <person name="Takiguchi S."/>
            <person name="Baba Y."/>
            <person name="Amino H."/>
            <person name="Horiuchi T."/>
            <person name="Sekimizu K."/>
            <person name="Miki T."/>
        </authorList>
    </citation>
    <scope>NUCLEOTIDE SEQUENCE [GENOMIC DNA] OF 799-876</scope>
    <source>
        <strain>KP4714</strain>
    </source>
</reference>
<reference key="9">
    <citation type="journal article" date="1993" name="J. Bacteriol.">
        <title>Identification and molecular characterization of csrA, a pleiotropic gene from Escherichia coli that affects glycogen biosynthesis, gluconeogenesis, cell size, and surface properties.</title>
        <authorList>
            <person name="Romeo T."/>
            <person name="Gong M."/>
            <person name="Liu M.-Y."/>
            <person name="Brun-Zinkernagel A.-M."/>
        </authorList>
    </citation>
    <scope>NUCLEOTIDE SEQUENCE [GENOMIC DNA] OF 866-876</scope>
    <source>
        <strain>K12</strain>
    </source>
</reference>
<reference key="10">
    <citation type="journal article" date="1981" name="J. Biol. Chem.">
        <title>Cloning, partial sequencing, and in vitro transcription of the gene for alanine tRNA synthetase.</title>
        <authorList>
            <person name="Putney S.D."/>
            <person name="Melendez D.L."/>
            <person name="Schimmel P.R."/>
        </authorList>
    </citation>
    <scope>NUCLEOTIDE SEQUENCE [GENOMIC DNA] OF 1-13</scope>
</reference>
<reference key="11">
    <citation type="journal article" date="1991" name="Biochemistry">
        <title>Evidence for a 'cysteine-histidine box' metal-binding site in an Escherichia coli aminoacyl-tRNA synthetase.</title>
        <authorList>
            <person name="Miller W.T."/>
            <person name="Hill K.A.W."/>
            <person name="Schimmel P."/>
        </authorList>
    </citation>
    <scope>ZINC-BINDING</scope>
    <scope>MUTAGENESIS OF CYS-179; CYS-182; GLU-184; ASP-188; HIS-189; ASP-191 AND HIS-192</scope>
</reference>
<reference key="12">
    <citation type="journal article" date="1994" name="Proc. Natl. Acad. Sci. U.S.A.">
        <title>A tRNA-like structure is present in 10Sa RNA, a small stable RNA from Escherichia coli.</title>
        <authorList>
            <person name="Komine Y."/>
            <person name="Kitabatake M."/>
            <person name="Yokogawa T."/>
            <person name="Nishikawa K."/>
            <person name="Inokuchi H."/>
        </authorList>
    </citation>
    <scope>FUNCTION IN AMINOACYLATION OF TMRNA</scope>
    <source>
        <strain>K12 / W3110 / ATCC 27325 / DSM 5911</strain>
    </source>
</reference>
<reference key="13">
    <citation type="journal article" date="1997" name="Electrophoresis">
        <title>Escherichia coli proteome analysis using the gene-protein database.</title>
        <authorList>
            <person name="VanBogelen R.A."/>
            <person name="Abshire K.Z."/>
            <person name="Moldover B."/>
            <person name="Olson E.R."/>
            <person name="Neidhardt F.C."/>
        </authorList>
    </citation>
    <scope>IDENTIFICATION BY 2D-GEL</scope>
</reference>
<reference key="14">
    <citation type="journal article" date="2003" name="EMBO J.">
        <title>Elucidation of tRNA-dependent editing by a class II tRNA synthetase and significance for cell viability.</title>
        <authorList>
            <person name="Beebe K."/>
            <person name="Ribas De Pouplana L."/>
            <person name="Schimmel P."/>
        </authorList>
    </citation>
    <scope>FUNCTION IN TRNA EDITING</scope>
    <scope>MUTAGENESIS OF HIS-564; HIS-568; GLN-584; CYS-666 AND HIS-670</scope>
</reference>
<reference key="15">
    <citation type="journal article" date="2008" name="J. Biol. Chem.">
        <title>Natural homolog of tRNA synthetase editing domain rescues conditional lethality caused by mistranslation.</title>
        <authorList>
            <person name="Chong Y.E."/>
            <person name="Yang X.L."/>
            <person name="Schimmel P."/>
        </authorList>
    </citation>
    <scope>FUNCTION IN TRNA EDITING</scope>
    <scope>MUTAGENESIS OF GLN-584 AND CYS-666</scope>
    <source>
        <strain>K12</strain>
    </source>
</reference>
<reference key="16">
    <citation type="journal article" date="2008" name="Nature">
        <title>Distinct domains of tRNA synthetase recognize the same base pair.</title>
        <authorList>
            <person name="Beebe K."/>
            <person name="Mock M."/>
            <person name="Merriman E."/>
            <person name="Schimmel P."/>
        </authorList>
    </citation>
    <scope>DOMAIN EDITING</scope>
    <scope>MUTAGENESIS OF ARG-693</scope>
</reference>
<reference key="17">
    <citation type="journal article" date="2009" name="Mol. Cell. Proteomics">
        <title>Lysine acetylation is a highly abundant and evolutionarily conserved modification in Escherichia coli.</title>
        <authorList>
            <person name="Zhang J."/>
            <person name="Sprung R."/>
            <person name="Pei J."/>
            <person name="Tan X."/>
            <person name="Kim S."/>
            <person name="Zhu H."/>
            <person name="Liu C.F."/>
            <person name="Grishin N.V."/>
            <person name="Zhao Y."/>
        </authorList>
    </citation>
    <scope>ACETYLATION [LARGE SCALE ANALYSIS] AT LYS-74</scope>
    <scope>IDENTIFICATION BY MASS SPECTROMETRY</scope>
    <source>
        <strain>K12 / JW1106</strain>
        <strain>K12 / MG1655 / ATCC 47076</strain>
    </source>
</reference>
<reference key="18">
    <citation type="journal article" date="2009" name="Science">
        <title>The C-Ala domain brings together editing and aminoacylation functions on one tRNA.</title>
        <authorList>
            <person name="Guo M."/>
            <person name="Chong Y.E."/>
            <person name="Beebe K."/>
            <person name="Shapiro R."/>
            <person name="Yang X.-L."/>
            <person name="Schimmel P."/>
        </authorList>
    </citation>
    <scope>FUNCTION IN TRNA-BINDING VIA C-ALA DOMAIN</scope>
    <scope>DOMAIN EXCHANGE EXPERIMENTS</scope>
</reference>
<reference key="19">
    <citation type="journal article" date="2017" name="Elife">
        <title>Role of D-aminoacyl-tRNA deacylase beyond chiral proofreading as a cellular defense against glycine mischarging by AlaRS.</title>
        <authorList>
            <person name="Pawar K.I."/>
            <person name="Suma K."/>
            <person name="Seenivasan A."/>
            <person name="Kuncha S.K."/>
            <person name="Routh S.B."/>
            <person name="Kruparani S.P."/>
            <person name="Sankaranarayanan R."/>
        </authorList>
    </citation>
    <scope>FUNCTION</scope>
    <scope>MUTAGENESIS OF THR-567; SER-587 AND CYS-666</scope>
</reference>
<reference key="20">
    <citation type="journal article" date="2018" name="Genes (Basel)">
        <title>Lysine Acetylation Regulates Alanyl-tRNA Synthetase Activity in Escherichia coli.</title>
        <authorList>
            <person name="Umehara T."/>
            <person name="Kosono S."/>
            <person name="Soell D."/>
            <person name="Tamura K."/>
        </authorList>
    </citation>
    <scope>FUNCTION</scope>
    <scope>CATALYTIC ACTIVITY</scope>
    <scope>ACTIVITY REGULATION</scope>
    <scope>ACETYLATION AT LYS-74</scope>
    <scope>MUTAGENESIS OF LYS-74</scope>
    <source>
        <strain>K12 / DH10B</strain>
    </source>
</reference>
<reference key="21">
    <citation type="journal article" date="2024" name="Nature">
        <title>AARS1 and AARS2 sense L-lactate to regulate cGAS as global lysine lactyltransferases.</title>
        <authorList>
            <person name="Li H."/>
            <person name="Liu C."/>
            <person name="Li R."/>
            <person name="Zhou L."/>
            <person name="Ran Y."/>
            <person name="Yang Q."/>
            <person name="Huang H."/>
            <person name="Lu H."/>
            <person name="Song H."/>
            <person name="Yang B."/>
            <person name="Ru H."/>
            <person name="Lin S."/>
            <person name="Zhang L."/>
        </authorList>
    </citation>
    <scope>FUNCTION</scope>
    <scope>CATALYTIC ACTIVITY</scope>
    <scope>MUTAGENESIS OF MET-44; ARG-70; TRP-171; ASN-213; 236-ASP--GLY-238 AND GLY-240</scope>
</reference>
<reference key="22">
    <citation type="journal article" date="2024" name="Cell">
        <title>Alanyl-tRNA synthetase, AARS1, is a lactate sensor and lactyltransferase that lactylates p53 and contributes to tumorigenesis.</title>
        <authorList>
            <person name="Zong Z."/>
            <person name="Xie F."/>
            <person name="Wang S."/>
            <person name="Wu X."/>
            <person name="Zhang Z."/>
            <person name="Yang B."/>
            <person name="Zhou F."/>
        </authorList>
    </citation>
    <scope>FUNCTION</scope>
    <scope>CATALYTIC ACTIVITY</scope>
    <scope>MUTAGENESIS OF MET-44; ARG-70; TRP-171; ASN-213 AND 236-ASP--GLY-238</scope>
</reference>
<reference evidence="16 17 18 19 20 21 22 23" key="23">
    <citation type="journal article" date="2009" name="Nature">
        <title>Paradox of mistranslation of serine for alanine caused by AlaRS recognition dilemma.</title>
        <authorList>
            <person name="Guo M."/>
            <person name="Chong Y.E."/>
            <person name="Shapiro R."/>
            <person name="Beebe K."/>
            <person name="Yang X.L."/>
            <person name="Schimmel P."/>
        </authorList>
    </citation>
    <scope>X-RAY CRYSTALLOGRAPHY (1.90 ANGSTROMS) OF 2-442 WITH AND WITHOUT CHARGED CORRECT AND INCORRECT AMINO ACID</scope>
    <scope>MUTAGENESIS OF ASP-236 AND GLY-238</scope>
</reference>
<keyword id="KW-0002">3D-structure</keyword>
<keyword id="KW-0007">Acetylation</keyword>
<keyword id="KW-0030">Aminoacyl-tRNA synthetase</keyword>
<keyword id="KW-0067">ATP-binding</keyword>
<keyword id="KW-0963">Cytoplasm</keyword>
<keyword id="KW-0903">Direct protein sequencing</keyword>
<keyword id="KW-0436">Ligase</keyword>
<keyword id="KW-0479">Metal-binding</keyword>
<keyword id="KW-0547">Nucleotide-binding</keyword>
<keyword id="KW-0648">Protein biosynthesis</keyword>
<keyword id="KW-1185">Reference proteome</keyword>
<keyword id="KW-0694">RNA-binding</keyword>
<keyword id="KW-0820">tRNA-binding</keyword>
<keyword id="KW-0862">Zinc</keyword>
<accession>P00957</accession>
<accession>P78279</accession>
<proteinExistence type="evidence at protein level"/>
<sequence length="876" mass="96032">MSKSTAEIRQAFLDFFHSKGHQVVASSSLVPHNDPTLLFTNAGMNQFKDVFLGLDKRNYSRATTSQRCVRAGGKHNDLENVGYTARHHTFFEMLGNFSFGDYFKHDAIQFAWELLTSEKWFALPKERLWVTVYESDDEAYEIWEKEVGIPRERIIRIGDNKGAPYASDNFWQMGDTGPCGPCTEIFYDHGDHIWGGPPGSPEEDGDRYIEIWNIVFMQFNRQADGTMEPLPKPSVDTGMGLERIAAVLQHVNSNYDIDLFRTLIQAVAKVTGATDLSNKSLRVIADHIRSCAFLIADGVMPSNENRGYVLRRIIRRAVRHGNMLGAKETFFYKLVGPLIDVMGSAGEDLKRQQAQVEQVLKTEEEQFARTLERGLALLDEELAKLSGDTLDGETAFRLYDTYGFPVDLTADVCRERNIKVDEAGFEAAMEEQRRRAREASGFGADYNAMIRVDSASEFKGYDHLELNGKVTALFVDGKAVDAINAGQEAVVVLDQTPFYAESGGQVGDKGELKGANFSFAVEDTQKYGQAIGHIGKLAAGSLKVGDAVQADVDEARRARIRLNHSATHLMHAALRQVLGTHVSQKGSLVNDKVLRFDFSHNEAMKPEEIRAVEDLVNTQIRRNLPIETNIMDLEAAKAKGAMALFGEKYDERVRVLSMGDFSTELCGGTHASRTGDIGLFRIISESGTAAGVRRIEAVTGEGAIATVHADSDRLSEVAHLLKGDSNNLADKVRSVLERTRQLEKELQQLKEQAAAQESANLSSKAIDVNGVKLLVSELSGVEPKMLRTMVDDLKNQLGSTIIVLATVVEGKVSLIAGVSKDVTDRVKAGELIGMVAQQVGGKGGGRPDMAQAGGTDAAALPAALASVKGWVSAKLQ</sequence>
<comment type="function">
    <text evidence="8 10 11">Catalyzes the attachment of L-alanine to tRNA(Ala) in a two-step reaction: L-alanine is first activated by ATP to form Ala-AMP and then transferred to the acceptor end of tRNA(Ala) (PubMed:28362257). AlaRS also incorrectly activates the sterically smaller amino acid glycine as well as the sterically larger amino acid L-serine; generates 2-fold more mischarged Gly than Ser (PubMed:28362257). These mischarged amino acids occur because the of inherent physicochemical limitations on discrimination between closely related amino acids (Ala, Gly and Ser) in the charging step (PubMed:28362257). In presence of high levels of lactate, also acts as a protein lactyltransferase that mediates lactylation of lysine residues in target proteins (PubMed:38653238, PubMed:39322678).</text>
</comment>
<comment type="function">
    <text evidence="2 5 8">Edits mischarged Ser-tRNA(Ala) and Gly-tRNA(Ala) but not incorrectly charged Ser-tRNA(Thr) (PubMed:12554667, PubMed:18723508). Dtd edits Gly-tRNA(Ala) 4-fold better than does AlaRS (PubMed:28362257).</text>
</comment>
<comment type="function">
    <text evidence="13">Attaches Ala to transfer-messenger RNA (tmRNA, also known as 10Sa RNA, the product of the ssrA gene). tmRNA plays a major role in rescue of stalled ribosomes via trans-translation.</text>
</comment>
<comment type="catalytic activity">
    <reaction evidence="9 12">
        <text>tRNA(Ala) + L-alanine + ATP = L-alanyl-tRNA(Ala) + AMP + diphosphate</text>
        <dbReference type="Rhea" id="RHEA:12540"/>
        <dbReference type="Rhea" id="RHEA-COMP:9657"/>
        <dbReference type="Rhea" id="RHEA-COMP:9923"/>
        <dbReference type="ChEBI" id="CHEBI:30616"/>
        <dbReference type="ChEBI" id="CHEBI:33019"/>
        <dbReference type="ChEBI" id="CHEBI:57972"/>
        <dbReference type="ChEBI" id="CHEBI:78442"/>
        <dbReference type="ChEBI" id="CHEBI:78497"/>
        <dbReference type="ChEBI" id="CHEBI:456215"/>
        <dbReference type="EC" id="6.1.1.7"/>
    </reaction>
    <physiologicalReaction direction="left-to-right" evidence="15">
        <dbReference type="Rhea" id="RHEA:12541"/>
    </physiologicalReaction>
</comment>
<comment type="catalytic activity">
    <reaction evidence="10">
        <text>(S)-lactate + ATP + H(+) = (S)-lactoyl-AMP + diphosphate</text>
        <dbReference type="Rhea" id="RHEA:80271"/>
        <dbReference type="ChEBI" id="CHEBI:15378"/>
        <dbReference type="ChEBI" id="CHEBI:16651"/>
        <dbReference type="ChEBI" id="CHEBI:30616"/>
        <dbReference type="ChEBI" id="CHEBI:33019"/>
        <dbReference type="ChEBI" id="CHEBI:231470"/>
    </reaction>
    <physiologicalReaction direction="left-to-right" evidence="10">
        <dbReference type="Rhea" id="RHEA:80272"/>
    </physiologicalReaction>
</comment>
<comment type="catalytic activity">
    <reaction evidence="10">
        <text>(S)-lactoyl-AMP + L-lysyl-[protein] = N(6)-[(S)-lactoyl]-L-lysyl-[protein] + AMP + 2 H(+)</text>
        <dbReference type="Rhea" id="RHEA:80275"/>
        <dbReference type="Rhea" id="RHEA-COMP:9752"/>
        <dbReference type="Rhea" id="RHEA-COMP:19466"/>
        <dbReference type="ChEBI" id="CHEBI:15378"/>
        <dbReference type="ChEBI" id="CHEBI:29969"/>
        <dbReference type="ChEBI" id="CHEBI:231470"/>
        <dbReference type="ChEBI" id="CHEBI:231527"/>
        <dbReference type="ChEBI" id="CHEBI:456215"/>
    </reaction>
    <physiologicalReaction direction="left-to-right" evidence="10">
        <dbReference type="Rhea" id="RHEA:80276"/>
    </physiologicalReaction>
</comment>
<comment type="cofactor">
    <cofactor>
        <name>Zn(2+)</name>
        <dbReference type="ChEBI" id="CHEBI:29105"/>
    </cofactor>
    <text evidence="3">Binds 1 zinc ion per subunit; it is not clear where this binding occurs.</text>
</comment>
<comment type="activity regulation">
    <text evidence="9">Acetylation at Lys-74 decreases the alanylation activity for tRNA(Ala); a protein that is fully acetylated is inactive in vitro.</text>
</comment>
<comment type="subunit">
    <text evidence="12">Homotetramer.</text>
</comment>
<comment type="interaction">
    <interactant intactId="EBI-544061">
        <id>P00957</id>
    </interactant>
    <interactant intactId="EBI-544061">
        <id>P00957</id>
        <label>alaS</label>
    </interactant>
    <organismsDiffer>false</organismsDiffer>
    <experiments>2</experiments>
</comment>
<comment type="subcellular location">
    <subcellularLocation>
        <location>Cytoplasm</location>
    </subcellularLocation>
</comment>
<comment type="domain">
    <text>Consists of three domains; the N-terminal catalytic domain, the editing domain and the C-terminal C-Ala domain. The editing domain removes incorrectly charged amino acids, while the C-Ala domain, along with tRNA(Ala), serves as a bridge to cooperatively bring together the editing and aminoacylation centers thus stimulating deacylation of misacylated tRNAs.</text>
</comment>
<comment type="domain">
    <text>The editing domain removes incorrectly charged amino acids, i.e. Ser-tRNA(Ala) or Gly-tRNA(Ala) become uncharged tRNA(Ala) and the amino acid. It is specific for the acceptor stem of tRNA(Ala).</text>
</comment>
<comment type="domain">
    <text evidence="14">The C-terminal C-Ala domain, along with tRNA(Ala), serves as a bridge to cooperatively bring together the editing and aminoacylation centers thus stimulating deacylation of misacylated tRNAs. This C-Ala domain can be replaced in vitro by the corresponding domain of Aquifex aeolicus or man. Recognition of tRNA(Ala) by the 2 domains is independent, that is one enzyme recognizes the same tRNA(Ala) in 2 different manners.</text>
</comment>
<comment type="similarity">
    <text evidence="14">Belongs to the class-II aminoacyl-tRNA synthetase family.</text>
</comment>